<organism>
    <name type="scientific">Salmonella typhimurium (strain LT2 / SGSC1412 / ATCC 700720)</name>
    <dbReference type="NCBI Taxonomy" id="99287"/>
    <lineage>
        <taxon>Bacteria</taxon>
        <taxon>Pseudomonadati</taxon>
        <taxon>Pseudomonadota</taxon>
        <taxon>Gammaproteobacteria</taxon>
        <taxon>Enterobacterales</taxon>
        <taxon>Enterobacteriaceae</taxon>
        <taxon>Salmonella</taxon>
    </lineage>
</organism>
<accession>Q93IN1</accession>
<reference key="1">
    <citation type="journal article" date="2001" name="Mol. Microbiol.">
        <title>The multicellular morphotypes of Salmonella typhimurium and Escherichia coli produce cellulose as the second component of the extracellular matrix.</title>
        <authorList>
            <person name="Zogaj X."/>
            <person name="Nimtz M."/>
            <person name="Rohde M."/>
            <person name="Bokranz W."/>
            <person name="Roemling U."/>
        </authorList>
    </citation>
    <scope>NUCLEOTIDE SEQUENCE [GENOMIC DNA]</scope>
    <source>
        <strain>ATCC 14028 / SGSG 2980 / CDC 6516-60 / NCTC 12023</strain>
    </source>
</reference>
<reference key="2">
    <citation type="journal article" date="2002" name="Mol. Microbiol.">
        <title>Genetic analysis of Salmonella enteritidis biofilm formation: critical role of cellulose.</title>
        <authorList>
            <person name="Solano C."/>
            <person name="Garcia B."/>
            <person name="Valle J."/>
            <person name="Berasain C."/>
            <person name="Ghigo J.-M."/>
            <person name="Gamazo C."/>
            <person name="Lasa I."/>
        </authorList>
    </citation>
    <scope>NUCLEOTIDE SEQUENCE [GENOMIC DNA]</scope>
    <source>
        <strain>LT2</strain>
    </source>
</reference>
<reference key="3">
    <citation type="journal article" date="2001" name="Nature">
        <title>Complete genome sequence of Salmonella enterica serovar Typhimurium LT2.</title>
        <authorList>
            <person name="McClelland M."/>
            <person name="Sanderson K.E."/>
            <person name="Spieth J."/>
            <person name="Clifton S.W."/>
            <person name="Latreille P."/>
            <person name="Courtney L."/>
            <person name="Porwollik S."/>
            <person name="Ali J."/>
            <person name="Dante M."/>
            <person name="Du F."/>
            <person name="Hou S."/>
            <person name="Layman D."/>
            <person name="Leonard S."/>
            <person name="Nguyen C."/>
            <person name="Scott K."/>
            <person name="Holmes A."/>
            <person name="Grewal N."/>
            <person name="Mulvaney E."/>
            <person name="Ryan E."/>
            <person name="Sun H."/>
            <person name="Florea L."/>
            <person name="Miller W."/>
            <person name="Stoneking T."/>
            <person name="Nhan M."/>
            <person name="Waterston R."/>
            <person name="Wilson R.K."/>
        </authorList>
    </citation>
    <scope>NUCLEOTIDE SEQUENCE [LARGE SCALE GENOMIC DNA]</scope>
    <source>
        <strain>LT2 / SGSC1412 / ATCC 700720</strain>
    </source>
</reference>
<name>BCSB_SALTY</name>
<gene>
    <name type="primary">bcsB</name>
    <name type="ordered locus">STM3618</name>
</gene>
<protein>
    <recommendedName>
        <fullName>Cyclic di-GMP-binding protein</fullName>
    </recommendedName>
    <alternativeName>
        <fullName>Cellulose synthase regulatory subunit</fullName>
    </alternativeName>
</protein>
<comment type="function">
    <text evidence="1">Binds the cellulose synthase activator, bis-(3'-5') cyclic diguanylic acid (c-di-GMP).</text>
</comment>
<comment type="pathway">
    <text>Glycan metabolism; bacterial cellulose biosynthesis.</text>
</comment>
<comment type="subunit">
    <text evidence="1">Tightly associated with the cellulose synthase catalytic subunit.</text>
</comment>
<comment type="subcellular location">
    <subcellularLocation>
        <location evidence="1">Cell inner membrane</location>
        <topology evidence="1">Single-pass type I membrane protein</topology>
    </subcellularLocation>
</comment>
<comment type="similarity">
    <text evidence="3">Belongs to the AcsB/BcsB family.</text>
</comment>
<feature type="signal peptide" evidence="2">
    <location>
        <begin position="1"/>
        <end position="28"/>
    </location>
</feature>
<feature type="chain" id="PRO_0000000271" description="Cyclic di-GMP-binding protein">
    <location>
        <begin position="29"/>
        <end position="766"/>
    </location>
</feature>
<feature type="topological domain" description="Periplasmic" evidence="2">
    <location>
        <begin position="29"/>
        <end position="729"/>
    </location>
</feature>
<feature type="transmembrane region" description="Helical" evidence="2">
    <location>
        <begin position="730"/>
        <end position="750"/>
    </location>
</feature>
<feature type="topological domain" description="Cytoplasmic" evidence="2">
    <location>
        <begin position="751"/>
        <end position="766"/>
    </location>
</feature>
<dbReference type="EMBL" id="AJ315770">
    <property type="protein sequence ID" value="CAC44016.1"/>
    <property type="molecule type" value="Genomic_DNA"/>
</dbReference>
<dbReference type="EMBL" id="AJ315148">
    <property type="protein sequence ID" value="CAC86198.1"/>
    <property type="molecule type" value="Genomic_DNA"/>
</dbReference>
<dbReference type="EMBL" id="AE006468">
    <property type="protein sequence ID" value="AAL22478.1"/>
    <property type="molecule type" value="Genomic_DNA"/>
</dbReference>
<dbReference type="RefSeq" id="WP_000823813.1">
    <property type="nucleotide sequence ID" value="NC_003197.2"/>
</dbReference>
<dbReference type="SMR" id="Q93IN1"/>
<dbReference type="STRING" id="99287.STM3618"/>
<dbReference type="PaxDb" id="99287-STM3618"/>
<dbReference type="KEGG" id="stm:STM3618"/>
<dbReference type="PATRIC" id="fig|99287.12.peg.3824"/>
<dbReference type="HOGENOM" id="CLU_003556_1_1_6"/>
<dbReference type="OMA" id="FQYMNPM"/>
<dbReference type="PhylomeDB" id="Q93IN1"/>
<dbReference type="BioCyc" id="SENT99287:STM3618-MONOMER"/>
<dbReference type="UniPathway" id="UPA00694"/>
<dbReference type="Proteomes" id="UP000001014">
    <property type="component" value="Chromosome"/>
</dbReference>
<dbReference type="GO" id="GO:0005886">
    <property type="term" value="C:plasma membrane"/>
    <property type="evidence" value="ECO:0000318"/>
    <property type="project" value="GO_Central"/>
</dbReference>
<dbReference type="GO" id="GO:0030244">
    <property type="term" value="P:cellulose biosynthetic process"/>
    <property type="evidence" value="ECO:0007669"/>
    <property type="project" value="UniProtKB-KW"/>
</dbReference>
<dbReference type="GO" id="GO:0006011">
    <property type="term" value="P:UDP-alpha-D-glucose metabolic process"/>
    <property type="evidence" value="ECO:0007669"/>
    <property type="project" value="InterPro"/>
</dbReference>
<dbReference type="FunFam" id="2.60.120.260:FF:000094">
    <property type="entry name" value="Cyclic di-GMP-binding protein"/>
    <property type="match status" value="1"/>
</dbReference>
<dbReference type="Gene3D" id="2.60.120.260">
    <property type="entry name" value="Galactose-binding domain-like"/>
    <property type="match status" value="2"/>
</dbReference>
<dbReference type="InterPro" id="IPR003920">
    <property type="entry name" value="Cell_synth_B"/>
</dbReference>
<dbReference type="InterPro" id="IPR018513">
    <property type="entry name" value="Cell_synthase_bac"/>
</dbReference>
<dbReference type="NCBIfam" id="NF008323">
    <property type="entry name" value="PRK11114.1-1"/>
    <property type="match status" value="1"/>
</dbReference>
<dbReference type="NCBIfam" id="NF008325">
    <property type="entry name" value="PRK11114.1-3"/>
    <property type="match status" value="1"/>
</dbReference>
<dbReference type="PANTHER" id="PTHR39083">
    <property type="entry name" value="CYCLIC DI-GMP-BINDING PROTEIN"/>
    <property type="match status" value="1"/>
</dbReference>
<dbReference type="PANTHER" id="PTHR39083:SF1">
    <property type="entry name" value="CYCLIC DI-GMP-BINDING PROTEIN"/>
    <property type="match status" value="1"/>
</dbReference>
<dbReference type="Pfam" id="PF03170">
    <property type="entry name" value="BcsB"/>
    <property type="match status" value="1"/>
</dbReference>
<dbReference type="PRINTS" id="PR01440">
    <property type="entry name" value="CELLSNTHASEB"/>
</dbReference>
<keyword id="KW-0973">c-di-GMP</keyword>
<keyword id="KW-0997">Cell inner membrane</keyword>
<keyword id="KW-1003">Cell membrane</keyword>
<keyword id="KW-0135">Cellulose biosynthesis</keyword>
<keyword id="KW-0472">Membrane</keyword>
<keyword id="KW-1185">Reference proteome</keyword>
<keyword id="KW-0732">Signal</keyword>
<keyword id="KW-0812">Transmembrane</keyword>
<keyword id="KW-1133">Transmembrane helix</keyword>
<sequence length="766" mass="84299">MKRKLSWMCAAVIGLSAFPAFMTAAAPATPPLINAEPTEPAPSPATEAPVVAQTAPSREVKLTFAQIAPPPGSMALRGVNPNGGIEFGMRSDEVASKAVLNLEYTPSPSLLPVQSQLKVYLNDELMGVLPVTKEQLGKKTLAQVPINPLFITDFNRVRLEFVGHYRDVCENPASSTLWLDIGRNSALDLTYNMLAVNNDLSHFPVPFFDPRDNRPVTLPIVFADMPDLAQQQAASIVASWFGSRAGWRGQRFPVLYNHLPDRNAIVFATNDRRPDFLRDHPAVNAPVIEMMSHPDNPYVKLLVVFGRDDKDLLQAAKGIAQGNILFRGSSVVVNDVKPLLARKPYDAPNWVRTDRPVTFGELKTYEEQLQSSGLEPAPINVSLNLPPDLYLLRSNGIDMDLNYRYTSPPTKDSSRLDISLNNQFLQAFSLNSTQETNRLLLRLPVLQGLLDGKTDVSIPALKLGAMNQLRFDFRYMNPMPGGSVDNCITFQPVPNHVVIGDDSTIDFSKYYHFIAMPDLRAFANAGFPFSRMADLSDTLAVMPKTPTEAQMETLLNTVGAIGGQTGFPAINLTITDDSAQIADKDADLLIISAIPGKLKDDKRIDLLVQATQSWVKTPMRQTAFPSIMPDEADRAADAQSTVTASGPMAAVVGFQSPFNDQRSVIALLADSPRGYQLLNDAVNDSGKRAAMFGSVAVIRESGVHSLRVGDIYYVGHLPWFERLWYALANHPVLLAVLAALSVVLLAWVLWRLLRILSRRRLDPDHE</sequence>
<proteinExistence type="inferred from homology"/>
<evidence type="ECO:0000250" key="1"/>
<evidence type="ECO:0000255" key="2"/>
<evidence type="ECO:0000305" key="3"/>